<dbReference type="EMBL" id="CP001365">
    <property type="protein sequence ID" value="ACM56612.1"/>
    <property type="molecule type" value="Genomic_DNA"/>
</dbReference>
<dbReference type="RefSeq" id="WP_015909760.1">
    <property type="nucleotide sequence ID" value="NC_012029.1"/>
</dbReference>
<dbReference type="SMR" id="B9LMM4"/>
<dbReference type="GeneID" id="7401910"/>
<dbReference type="KEGG" id="hla:Hlac_1015"/>
<dbReference type="eggNOG" id="arCOG02287">
    <property type="taxonomic scope" value="Archaea"/>
</dbReference>
<dbReference type="HOGENOM" id="CLU_117144_1_2_2"/>
<dbReference type="Proteomes" id="UP000000740">
    <property type="component" value="Chromosome 1"/>
</dbReference>
<dbReference type="Gene3D" id="3.30.110.70">
    <property type="entry name" value="Hypothetical protein apc22750. Chain B"/>
    <property type="match status" value="1"/>
</dbReference>
<dbReference type="HAMAP" id="MF_00338">
    <property type="entry name" value="UPF0145"/>
    <property type="match status" value="1"/>
</dbReference>
<dbReference type="InterPro" id="IPR035439">
    <property type="entry name" value="UPF0145_dom_sf"/>
</dbReference>
<dbReference type="InterPro" id="IPR002765">
    <property type="entry name" value="UPF0145_YbjQ-like"/>
</dbReference>
<dbReference type="PANTHER" id="PTHR34068:SF2">
    <property type="entry name" value="UPF0145 PROTEIN SCO3412"/>
    <property type="match status" value="1"/>
</dbReference>
<dbReference type="PANTHER" id="PTHR34068">
    <property type="entry name" value="UPF0145 PROTEIN YBJQ"/>
    <property type="match status" value="1"/>
</dbReference>
<dbReference type="Pfam" id="PF01906">
    <property type="entry name" value="YbjQ_1"/>
    <property type="match status" value="1"/>
</dbReference>
<dbReference type="SUPFAM" id="SSF117782">
    <property type="entry name" value="YbjQ-like"/>
    <property type="match status" value="1"/>
</dbReference>
<comment type="similarity">
    <text evidence="1">Belongs to the UPF0145 family.</text>
</comment>
<sequence>MELSNTESIAGKEVVETLGLVRGNTVRARNVGRDITQGLRNLAGGELKGYTELMTDARDQAQDRMIEEAEALGADGVINVRFTTSSIADSGAEILAYGTAVRLR</sequence>
<keyword id="KW-1185">Reference proteome</keyword>
<protein>
    <recommendedName>
        <fullName evidence="1">UPF0145 protein Hlac_1015</fullName>
    </recommendedName>
</protein>
<feature type="chain" id="PRO_1000205239" description="UPF0145 protein Hlac_1015">
    <location>
        <begin position="1"/>
        <end position="104"/>
    </location>
</feature>
<gene>
    <name type="ordered locus">Hlac_1015</name>
</gene>
<name>Y1015_HALLT</name>
<accession>B9LMM4</accession>
<reference key="1">
    <citation type="journal article" date="2016" name="Stand. Genomic Sci.">
        <title>Complete genome sequence of the Antarctic Halorubrum lacusprofundi type strain ACAM 34.</title>
        <authorList>
            <person name="Anderson I.J."/>
            <person name="DasSarma P."/>
            <person name="Lucas S."/>
            <person name="Copeland A."/>
            <person name="Lapidus A."/>
            <person name="Del Rio T.G."/>
            <person name="Tice H."/>
            <person name="Dalin E."/>
            <person name="Bruce D.C."/>
            <person name="Goodwin L."/>
            <person name="Pitluck S."/>
            <person name="Sims D."/>
            <person name="Brettin T.S."/>
            <person name="Detter J.C."/>
            <person name="Han C.S."/>
            <person name="Larimer F."/>
            <person name="Hauser L."/>
            <person name="Land M."/>
            <person name="Ivanova N."/>
            <person name="Richardson P."/>
            <person name="Cavicchioli R."/>
            <person name="DasSarma S."/>
            <person name="Woese C.R."/>
            <person name="Kyrpides N.C."/>
        </authorList>
    </citation>
    <scope>NUCLEOTIDE SEQUENCE [LARGE SCALE GENOMIC DNA]</scope>
    <source>
        <strain>ATCC 49239 / DSM 5036 / JCM 8891 / ACAM 34</strain>
    </source>
</reference>
<proteinExistence type="inferred from homology"/>
<evidence type="ECO:0000255" key="1">
    <source>
        <dbReference type="HAMAP-Rule" id="MF_00338"/>
    </source>
</evidence>
<organism>
    <name type="scientific">Halorubrum lacusprofundi (strain ATCC 49239 / DSM 5036 / JCM 8891 / ACAM 34)</name>
    <dbReference type="NCBI Taxonomy" id="416348"/>
    <lineage>
        <taxon>Archaea</taxon>
        <taxon>Methanobacteriati</taxon>
        <taxon>Methanobacteriota</taxon>
        <taxon>Stenosarchaea group</taxon>
        <taxon>Halobacteria</taxon>
        <taxon>Halobacteriales</taxon>
        <taxon>Haloferacaceae</taxon>
        <taxon>Halorubrum</taxon>
    </lineage>
</organism>